<accession>A1T8J4</accession>
<gene>
    <name evidence="1" type="primary">fmt</name>
    <name type="ordered locus">Mvan_2687</name>
</gene>
<feature type="chain" id="PRO_1000020107" description="Methionyl-tRNA formyltransferase">
    <location>
        <begin position="1"/>
        <end position="310"/>
    </location>
</feature>
<feature type="binding site" evidence="1">
    <location>
        <begin position="110"/>
        <end position="113"/>
    </location>
    <ligand>
        <name>(6S)-5,6,7,8-tetrahydrofolate</name>
        <dbReference type="ChEBI" id="CHEBI:57453"/>
    </ligand>
</feature>
<keyword id="KW-0648">Protein biosynthesis</keyword>
<keyword id="KW-0808">Transferase</keyword>
<dbReference type="EC" id="2.1.2.9" evidence="1"/>
<dbReference type="EMBL" id="CP000511">
    <property type="protein sequence ID" value="ABM13494.1"/>
    <property type="molecule type" value="Genomic_DNA"/>
</dbReference>
<dbReference type="RefSeq" id="WP_011779902.1">
    <property type="nucleotide sequence ID" value="NZ_JACKSD010000206.1"/>
</dbReference>
<dbReference type="SMR" id="A1T8J4"/>
<dbReference type="STRING" id="350058.Mvan_2687"/>
<dbReference type="KEGG" id="mva:Mvan_2687"/>
<dbReference type="eggNOG" id="COG0223">
    <property type="taxonomic scope" value="Bacteria"/>
</dbReference>
<dbReference type="HOGENOM" id="CLU_033347_1_0_11"/>
<dbReference type="Proteomes" id="UP000009159">
    <property type="component" value="Chromosome"/>
</dbReference>
<dbReference type="GO" id="GO:0005829">
    <property type="term" value="C:cytosol"/>
    <property type="evidence" value="ECO:0007669"/>
    <property type="project" value="TreeGrafter"/>
</dbReference>
<dbReference type="GO" id="GO:0004479">
    <property type="term" value="F:methionyl-tRNA formyltransferase activity"/>
    <property type="evidence" value="ECO:0007669"/>
    <property type="project" value="UniProtKB-UniRule"/>
</dbReference>
<dbReference type="CDD" id="cd08646">
    <property type="entry name" value="FMT_core_Met-tRNA-FMT_N"/>
    <property type="match status" value="1"/>
</dbReference>
<dbReference type="CDD" id="cd08704">
    <property type="entry name" value="Met_tRNA_FMT_C"/>
    <property type="match status" value="1"/>
</dbReference>
<dbReference type="FunFam" id="3.40.50.12230:FF:000001">
    <property type="entry name" value="Methionyl-tRNA formyltransferase"/>
    <property type="match status" value="1"/>
</dbReference>
<dbReference type="Gene3D" id="3.40.50.12230">
    <property type="match status" value="1"/>
</dbReference>
<dbReference type="HAMAP" id="MF_00182">
    <property type="entry name" value="Formyl_trans"/>
    <property type="match status" value="1"/>
</dbReference>
<dbReference type="InterPro" id="IPR005794">
    <property type="entry name" value="Fmt"/>
</dbReference>
<dbReference type="InterPro" id="IPR005793">
    <property type="entry name" value="Formyl_trans_C"/>
</dbReference>
<dbReference type="InterPro" id="IPR002376">
    <property type="entry name" value="Formyl_transf_N"/>
</dbReference>
<dbReference type="InterPro" id="IPR036477">
    <property type="entry name" value="Formyl_transf_N_sf"/>
</dbReference>
<dbReference type="InterPro" id="IPR011034">
    <property type="entry name" value="Formyl_transferase-like_C_sf"/>
</dbReference>
<dbReference type="InterPro" id="IPR044135">
    <property type="entry name" value="Met-tRNA-FMT_C"/>
</dbReference>
<dbReference type="InterPro" id="IPR041711">
    <property type="entry name" value="Met-tRNA-FMT_N"/>
</dbReference>
<dbReference type="NCBIfam" id="TIGR00460">
    <property type="entry name" value="fmt"/>
    <property type="match status" value="1"/>
</dbReference>
<dbReference type="PANTHER" id="PTHR11138">
    <property type="entry name" value="METHIONYL-TRNA FORMYLTRANSFERASE"/>
    <property type="match status" value="1"/>
</dbReference>
<dbReference type="PANTHER" id="PTHR11138:SF5">
    <property type="entry name" value="METHIONYL-TRNA FORMYLTRANSFERASE, MITOCHONDRIAL"/>
    <property type="match status" value="1"/>
</dbReference>
<dbReference type="Pfam" id="PF02911">
    <property type="entry name" value="Formyl_trans_C"/>
    <property type="match status" value="1"/>
</dbReference>
<dbReference type="Pfam" id="PF00551">
    <property type="entry name" value="Formyl_trans_N"/>
    <property type="match status" value="1"/>
</dbReference>
<dbReference type="SUPFAM" id="SSF50486">
    <property type="entry name" value="FMT C-terminal domain-like"/>
    <property type="match status" value="1"/>
</dbReference>
<dbReference type="SUPFAM" id="SSF53328">
    <property type="entry name" value="Formyltransferase"/>
    <property type="match status" value="1"/>
</dbReference>
<reference key="1">
    <citation type="submission" date="2006-12" db="EMBL/GenBank/DDBJ databases">
        <title>Complete sequence of Mycobacterium vanbaalenii PYR-1.</title>
        <authorList>
            <consortium name="US DOE Joint Genome Institute"/>
            <person name="Copeland A."/>
            <person name="Lucas S."/>
            <person name="Lapidus A."/>
            <person name="Barry K."/>
            <person name="Detter J.C."/>
            <person name="Glavina del Rio T."/>
            <person name="Hammon N."/>
            <person name="Israni S."/>
            <person name="Dalin E."/>
            <person name="Tice H."/>
            <person name="Pitluck S."/>
            <person name="Singan V."/>
            <person name="Schmutz J."/>
            <person name="Larimer F."/>
            <person name="Land M."/>
            <person name="Hauser L."/>
            <person name="Kyrpides N."/>
            <person name="Anderson I.J."/>
            <person name="Miller C."/>
            <person name="Richardson P."/>
        </authorList>
    </citation>
    <scope>NUCLEOTIDE SEQUENCE [LARGE SCALE GENOMIC DNA]</scope>
    <source>
        <strain>DSM 7251 / JCM 13017 / BCRC 16820 / KCTC 9966 / NRRL B-24157 / PYR-1</strain>
    </source>
</reference>
<organism>
    <name type="scientific">Mycolicibacterium vanbaalenii (strain DSM 7251 / JCM 13017 / BCRC 16820 / KCTC 9966 / NRRL B-24157 / PYR-1)</name>
    <name type="common">Mycobacterium vanbaalenii</name>
    <dbReference type="NCBI Taxonomy" id="350058"/>
    <lineage>
        <taxon>Bacteria</taxon>
        <taxon>Bacillati</taxon>
        <taxon>Actinomycetota</taxon>
        <taxon>Actinomycetes</taxon>
        <taxon>Mycobacteriales</taxon>
        <taxon>Mycobacteriaceae</taxon>
        <taxon>Mycolicibacterium</taxon>
    </lineage>
</organism>
<evidence type="ECO:0000255" key="1">
    <source>
        <dbReference type="HAMAP-Rule" id="MF_00182"/>
    </source>
</evidence>
<name>FMT_MYCVP</name>
<proteinExistence type="inferred from homology"/>
<comment type="function">
    <text evidence="1">Attaches a formyl group to the free amino group of methionyl-tRNA(fMet). The formyl group appears to play a dual role in the initiator identity of N-formylmethionyl-tRNA by promoting its recognition by IF2 and preventing the misappropriation of this tRNA by the elongation apparatus.</text>
</comment>
<comment type="catalytic activity">
    <reaction evidence="1">
        <text>L-methionyl-tRNA(fMet) + (6R)-10-formyltetrahydrofolate = N-formyl-L-methionyl-tRNA(fMet) + (6S)-5,6,7,8-tetrahydrofolate + H(+)</text>
        <dbReference type="Rhea" id="RHEA:24380"/>
        <dbReference type="Rhea" id="RHEA-COMP:9952"/>
        <dbReference type="Rhea" id="RHEA-COMP:9953"/>
        <dbReference type="ChEBI" id="CHEBI:15378"/>
        <dbReference type="ChEBI" id="CHEBI:57453"/>
        <dbReference type="ChEBI" id="CHEBI:78530"/>
        <dbReference type="ChEBI" id="CHEBI:78844"/>
        <dbReference type="ChEBI" id="CHEBI:195366"/>
        <dbReference type="EC" id="2.1.2.9"/>
    </reaction>
</comment>
<comment type="similarity">
    <text evidence="1">Belongs to the Fmt family.</text>
</comment>
<protein>
    <recommendedName>
        <fullName evidence="1">Methionyl-tRNA formyltransferase</fullName>
        <ecNumber evidence="1">2.1.2.9</ecNumber>
    </recommendedName>
</protein>
<sequence>MRLVFAGTPEPALPSLQRLIDSDRHEVIAVMTRPDAVAGRRGRPSPSPVAQLAAAHGIPVLKPARPNSGEFVAELSALSPDCCAVVAYGALLGDALLAVPAHGWVNLHFSVLPAWRGAAPVQAALAAGDEVTGATTFQIERSLDSGPVYGVVTETIRPTDTAGDLLERLSVSGAGLLEATMDGIEDGTLTAVPQPPEGVSVAPKVTVDDARIRWELPAHVVDRRVRSVTPNPGAWTMIGDQRIKVGPVTVAGDGPKGLEPGEIRVDKKHIHVGTGSDAVLLGTVQPPGKKPMNAADWARGARLDENGWAR</sequence>